<comment type="similarity">
    <text evidence="1">Belongs to the bacterial ribosomal protein bS16 family.</text>
</comment>
<accession>Q3B4A3</accession>
<feature type="chain" id="PRO_0000243843" description="Small ribosomal subunit protein bS16">
    <location>
        <begin position="1"/>
        <end position="195"/>
    </location>
</feature>
<feature type="region of interest" description="Disordered" evidence="2">
    <location>
        <begin position="171"/>
        <end position="195"/>
    </location>
</feature>
<feature type="compositionally biased region" description="Low complexity" evidence="2">
    <location>
        <begin position="171"/>
        <end position="181"/>
    </location>
</feature>
<keyword id="KW-1185">Reference proteome</keyword>
<keyword id="KW-0687">Ribonucleoprotein</keyword>
<keyword id="KW-0689">Ribosomal protein</keyword>
<reference key="1">
    <citation type="submission" date="2005-08" db="EMBL/GenBank/DDBJ databases">
        <title>Complete sequence of Pelodictyon luteolum DSM 273.</title>
        <authorList>
            <consortium name="US DOE Joint Genome Institute"/>
            <person name="Copeland A."/>
            <person name="Lucas S."/>
            <person name="Lapidus A."/>
            <person name="Barry K."/>
            <person name="Detter J.C."/>
            <person name="Glavina T."/>
            <person name="Hammon N."/>
            <person name="Israni S."/>
            <person name="Pitluck S."/>
            <person name="Bryant D."/>
            <person name="Schmutz J."/>
            <person name="Larimer F."/>
            <person name="Land M."/>
            <person name="Kyrpides N."/>
            <person name="Ivanova N."/>
            <person name="Richardson P."/>
        </authorList>
    </citation>
    <scope>NUCLEOTIDE SEQUENCE [LARGE SCALE GENOMIC DNA]</scope>
    <source>
        <strain>DSM 273 / BCRC 81028 / 2530</strain>
    </source>
</reference>
<organism>
    <name type="scientific">Chlorobium luteolum (strain DSM 273 / BCRC 81028 / 2530)</name>
    <name type="common">Pelodictyon luteolum</name>
    <dbReference type="NCBI Taxonomy" id="319225"/>
    <lineage>
        <taxon>Bacteria</taxon>
        <taxon>Pseudomonadati</taxon>
        <taxon>Chlorobiota</taxon>
        <taxon>Chlorobiia</taxon>
        <taxon>Chlorobiales</taxon>
        <taxon>Chlorobiaceae</taxon>
        <taxon>Chlorobium/Pelodictyon group</taxon>
        <taxon>Pelodictyon</taxon>
    </lineage>
</organism>
<sequence length="195" mass="21467">MVKIRLRRAGRKKLPVYQIVAADARAPRDGKFLEVVGHYQPTAKPHVVTLDRERVAYWMQTGAQPTSTVRSLIQKTGLLYELRLKKLGRSEAEVAEEMEKWQEKQAERRQKRLNVKSRRRQLKKEAAAKPAVAEEVAAPVAAAPVAEAPVAEVEVVIAPEVQVEAAVEAVPEAPVAAAEPAPEVKAEEKEEGGEA</sequence>
<name>RS16_CHLL3</name>
<protein>
    <recommendedName>
        <fullName evidence="1">Small ribosomal subunit protein bS16</fullName>
    </recommendedName>
    <alternativeName>
        <fullName evidence="3">30S ribosomal protein S16</fullName>
    </alternativeName>
</protein>
<gene>
    <name evidence="1" type="primary">rpsP</name>
    <name type="ordered locus">Plut_0966</name>
</gene>
<dbReference type="EMBL" id="CP000096">
    <property type="protein sequence ID" value="ABB23828.1"/>
    <property type="molecule type" value="Genomic_DNA"/>
</dbReference>
<dbReference type="SMR" id="Q3B4A3"/>
<dbReference type="STRING" id="319225.Plut_0966"/>
<dbReference type="KEGG" id="plt:Plut_0966"/>
<dbReference type="eggNOG" id="COG0228">
    <property type="taxonomic scope" value="Bacteria"/>
</dbReference>
<dbReference type="HOGENOM" id="CLU_100590_0_0_10"/>
<dbReference type="OrthoDB" id="9807878at2"/>
<dbReference type="Proteomes" id="UP000002709">
    <property type="component" value="Chromosome"/>
</dbReference>
<dbReference type="GO" id="GO:0005737">
    <property type="term" value="C:cytoplasm"/>
    <property type="evidence" value="ECO:0007669"/>
    <property type="project" value="UniProtKB-ARBA"/>
</dbReference>
<dbReference type="GO" id="GO:0015935">
    <property type="term" value="C:small ribosomal subunit"/>
    <property type="evidence" value="ECO:0007669"/>
    <property type="project" value="TreeGrafter"/>
</dbReference>
<dbReference type="GO" id="GO:0003735">
    <property type="term" value="F:structural constituent of ribosome"/>
    <property type="evidence" value="ECO:0007669"/>
    <property type="project" value="InterPro"/>
</dbReference>
<dbReference type="GO" id="GO:0006412">
    <property type="term" value="P:translation"/>
    <property type="evidence" value="ECO:0007669"/>
    <property type="project" value="UniProtKB-UniRule"/>
</dbReference>
<dbReference type="Gene3D" id="3.30.1320.10">
    <property type="match status" value="1"/>
</dbReference>
<dbReference type="HAMAP" id="MF_00385">
    <property type="entry name" value="Ribosomal_bS16"/>
    <property type="match status" value="1"/>
</dbReference>
<dbReference type="InterPro" id="IPR000307">
    <property type="entry name" value="Ribosomal_bS16"/>
</dbReference>
<dbReference type="InterPro" id="IPR023803">
    <property type="entry name" value="Ribosomal_bS16_dom_sf"/>
</dbReference>
<dbReference type="NCBIfam" id="TIGR00002">
    <property type="entry name" value="S16"/>
    <property type="match status" value="1"/>
</dbReference>
<dbReference type="PANTHER" id="PTHR12919">
    <property type="entry name" value="30S RIBOSOMAL PROTEIN S16"/>
    <property type="match status" value="1"/>
</dbReference>
<dbReference type="PANTHER" id="PTHR12919:SF20">
    <property type="entry name" value="SMALL RIBOSOMAL SUBUNIT PROTEIN BS16M"/>
    <property type="match status" value="1"/>
</dbReference>
<dbReference type="Pfam" id="PF00886">
    <property type="entry name" value="Ribosomal_S16"/>
    <property type="match status" value="1"/>
</dbReference>
<dbReference type="SUPFAM" id="SSF54565">
    <property type="entry name" value="Ribosomal protein S16"/>
    <property type="match status" value="1"/>
</dbReference>
<evidence type="ECO:0000255" key="1">
    <source>
        <dbReference type="HAMAP-Rule" id="MF_00385"/>
    </source>
</evidence>
<evidence type="ECO:0000256" key="2">
    <source>
        <dbReference type="SAM" id="MobiDB-lite"/>
    </source>
</evidence>
<evidence type="ECO:0000305" key="3"/>
<proteinExistence type="inferred from homology"/>